<comment type="function">
    <text evidence="5 6 7 8 9 10 11">DNA-dependent ATPase component of the Fanconi anemia (FA) core complex (PubMed:16116422). Required for the normal activation of the FA pathway, leading to monoubiquitination of the FANCI-FANCD2 complex in response to DNA damage, cellular resistance to DNA cross-linking drugs, and prevention of chromosomal breakage (PubMed:16116422, PubMed:19423727, PubMed:20347428, PubMed:20347429, PubMed:29231814). In complex with CENPS and CENPX, binds double-stranded DNA (dsDNA), fork-structured DNA (fsDNA) and Holliday junction substrates (PubMed:20347428, PubMed:20347429). Its ATP-dependent DNA branch migration activity can process branched DNA structures such as a movable replication fork. This activity is strongly stimulated in the presence of CENPS and CENPX (PubMed:20347429). In complex with FAAP24, efficiently binds to single-strand DNA (ssDNA), splayed-arm DNA, and 3'-flap substrates (PubMed:17289582). In vitro, on its own, strongly binds ssDNA oligomers and weakly fsDNA, but does not bind to dsDNA (PubMed:16116434).</text>
</comment>
<comment type="catalytic activity">
    <reaction evidence="5 7 8 10">
        <text>ATP + H2O = ADP + phosphate + H(+)</text>
        <dbReference type="Rhea" id="RHEA:13065"/>
        <dbReference type="ChEBI" id="CHEBI:15377"/>
        <dbReference type="ChEBI" id="CHEBI:15378"/>
        <dbReference type="ChEBI" id="CHEBI:30616"/>
        <dbReference type="ChEBI" id="CHEBI:43474"/>
        <dbReference type="ChEBI" id="CHEBI:456216"/>
        <dbReference type="EC" id="3.6.4.13"/>
    </reaction>
</comment>
<comment type="subunit">
    <text evidence="5 6 7 9 10">Component of the Fanconi anemia (FA) core complex, which consists of CENPS, CENPX, FANCA, FANCB, FANCC, FANCE, FANCF, FANCG, FANCL, FANCM, FAAP24 and FAAP100 (PubMed:16116422, PubMed:16116434, PubMed:17289582). The FA core complex associates with Bloom syndrome (BLM) complex, which consists of at least BLM, DNA topoisomerase 3-alpha/TOP3A, RMI1/BLAP75, RPA1/RPA70 and RPA2/RPA32. This supercomplex between FA and BLM complexes has been called BRAFT (PubMed:20347428). Forms a discrete complex with CENPS and CENPX, called FANCM-MHF; this interaction stimulates DNA binding and replication fork remodeling by FANCM and stabilizes the binding partners (PubMed:20347428, PubMed:20347429). Forms a heterodimer with FAAP24; this interaction increases FANCM single-stranded DNA-binding activity (PubMed:17289582, PubMed:20347428).</text>
</comment>
<comment type="interaction">
    <interactant intactId="EBI-3957237">
        <id>Q8IYD8</id>
    </interactant>
    <interactant intactId="EBI-12135243">
        <id>O95208-2</id>
        <label>EPN2</label>
    </interactant>
    <organismsDiffer>false</organismsDiffer>
    <experiments>3</experiments>
</comment>
<comment type="interaction">
    <interactant intactId="EBI-3957237">
        <id>Q8IYD8</id>
    </interactant>
    <interactant intactId="EBI-1045650">
        <id>Q9BTP7</id>
        <label>FAAP24</label>
    </interactant>
    <organismsDiffer>false</organismsDiffer>
    <experiments>12</experiments>
</comment>
<comment type="interaction">
    <interactant intactId="EBI-3957237">
        <id>Q8IYD8</id>
    </interactant>
    <interactant intactId="EBI-374819">
        <id>P49736</id>
        <label>MCM2</label>
    </interactant>
    <organismsDiffer>false</organismsDiffer>
    <experiments>5</experiments>
</comment>
<comment type="interaction">
    <interactant intactId="EBI-3957237">
        <id>Q8IYD8</id>
    </interactant>
    <interactant intactId="EBI-719493">
        <id>P14373</id>
        <label>TRIM27</label>
    </interactant>
    <organismsDiffer>false</organismsDiffer>
    <experiments>3</experiments>
</comment>
<comment type="interaction">
    <interactant intactId="EBI-16067666">
        <id>Q8IYD8-1</id>
    </interactant>
    <interactant intactId="EBI-1045650">
        <id>Q9BTP7</id>
        <label>FAAP24</label>
    </interactant>
    <organismsDiffer>false</organismsDiffer>
    <experiments>2</experiments>
</comment>
<comment type="subcellular location">
    <subcellularLocation>
        <location evidence="5 9 10 11">Nucleus</location>
    </subcellularLocation>
</comment>
<comment type="alternative products">
    <event type="alternative splicing"/>
    <isoform>
        <id>Q8IYD8-1</id>
        <name>1</name>
        <sequence type="displayed"/>
    </isoform>
    <isoform>
        <id>Q8IYD8-2</id>
        <name>2</name>
        <sequence type="described" ref="VSP_015989 VSP_015990"/>
    </isoform>
    <isoform>
        <id>Q8IYD8-3</id>
        <name>3</name>
        <sequence type="described" ref="VSP_054504"/>
    </isoform>
</comment>
<comment type="tissue specificity">
    <text evidence="11 13">Expressed in germ cells of fetal and adult ovaries. In fetal ovaries, it is present in oogonia but expression is stronger in pachytene stage oocytes. Expressed in oocytes arrested at the diplotene stage of prophase I during the last trimester of pregnancy and in adults (PubMed:29231814). Expressed in the testis (PubMed:30075111).</text>
</comment>
<comment type="developmental stage">
    <text evidence="11">Expressed throughout ovarian development (5-32 weeks post-fertilization (wpf)). Expression tends to be higher at 14 and 17 wpf.</text>
</comment>
<comment type="PTM">
    <text evidence="5">Phosphorylated; hyperphosphorylated in response to genotoxic stress.</text>
</comment>
<comment type="disease" evidence="12 13">
    <disease id="DI-05308">
        <name>Spermatogenic failure 28</name>
        <acronym>SPGF28</acronym>
        <description>An autosomal recessive infertility disorder caused by spermatogenesis defects that result in oligoasthenospermia or non-obstructive azoospermia.</description>
        <dbReference type="MIM" id="618086"/>
    </disease>
    <text>The disease is caused by variants affecting the gene represented in this entry.</text>
</comment>
<comment type="disease" evidence="11">
    <disease id="DI-05319">
        <name>Premature ovarian failure 15</name>
        <acronym>POF15</acronym>
        <description>An ovarian disorder defined as the cessation of ovarian function under the age of 40 years. It is characterized by oligomenorrhea or amenorrhea, in the presence of elevated levels of serum gonadotropins and low estradiol.</description>
        <dbReference type="MIM" id="618096"/>
    </disease>
    <text>The disease is caused by variants affecting the gene represented in this entry.</text>
</comment>
<comment type="similarity">
    <text evidence="18">Belongs to the DEAD box helicase family. DEAH subfamily. FANCM sub-subfamily.</text>
</comment>
<comment type="sequence caution" evidence="18">
    <conflict type="miscellaneous discrepancy">
        <sequence resource="EMBL-CDS" id="BAB13422"/>
    </conflict>
    <text>Intron retention.</text>
</comment>
<comment type="online information" name="Fanconi Anemia Mutation Database">
    <link uri="https://www2.rockefeller.edu/fanconi/genes/jumpm"/>
</comment>
<gene>
    <name type="primary">FANCM</name>
    <name type="synonym">KIAA1596</name>
</gene>
<accession>Q8IYD8</accession>
<accession>B2RTQ9</accession>
<accession>Q3YFH9</accession>
<accession>Q8N9X6</accession>
<accession>Q9HCH6</accession>
<dbReference type="EC" id="3.6.4.13" evidence="5 7 8 10"/>
<dbReference type="EMBL" id="DQ140356">
    <property type="protein sequence ID" value="AAZ53290.1"/>
    <property type="molecule type" value="mRNA"/>
</dbReference>
<dbReference type="EMBL" id="AK093422">
    <property type="protein sequence ID" value="BAC04159.1"/>
    <property type="molecule type" value="mRNA"/>
</dbReference>
<dbReference type="EMBL" id="AL121809">
    <property type="status" value="NOT_ANNOTATED_CDS"/>
    <property type="molecule type" value="Genomic_DNA"/>
</dbReference>
<dbReference type="EMBL" id="BC036056">
    <property type="protein sequence ID" value="AAH36056.1"/>
    <property type="molecule type" value="mRNA"/>
</dbReference>
<dbReference type="EMBL" id="BC140776">
    <property type="protein sequence ID" value="AAI40777.1"/>
    <property type="molecule type" value="mRNA"/>
</dbReference>
<dbReference type="EMBL" id="BC144511">
    <property type="protein sequence ID" value="AAI44512.1"/>
    <property type="molecule type" value="mRNA"/>
</dbReference>
<dbReference type="EMBL" id="AB046816">
    <property type="protein sequence ID" value="BAB13422.1"/>
    <property type="status" value="ALT_SEQ"/>
    <property type="molecule type" value="mRNA"/>
</dbReference>
<dbReference type="CCDS" id="CCDS32070.1">
    <molecule id="Q8IYD8-1"/>
</dbReference>
<dbReference type="CCDS" id="CCDS76677.1">
    <molecule id="Q8IYD8-3"/>
</dbReference>
<dbReference type="CCDS" id="CCDS81802.1">
    <molecule id="Q8IYD8-2"/>
</dbReference>
<dbReference type="RefSeq" id="NP_001295062.1">
    <molecule id="Q8IYD8-3"/>
    <property type="nucleotide sequence ID" value="NM_001308133.2"/>
</dbReference>
<dbReference type="RefSeq" id="NP_001295063.1">
    <molecule id="Q8IYD8-2"/>
    <property type="nucleotide sequence ID" value="NM_001308134.2"/>
</dbReference>
<dbReference type="RefSeq" id="NP_065988.1">
    <molecule id="Q8IYD8-1"/>
    <property type="nucleotide sequence ID" value="NM_020937.4"/>
</dbReference>
<dbReference type="PDB" id="4BXO">
    <property type="method" value="X-ray"/>
    <property type="resolution" value="2.15 A"/>
    <property type="chains" value="A=1798-2048"/>
</dbReference>
<dbReference type="PDB" id="4DAY">
    <property type="method" value="X-ray"/>
    <property type="resolution" value="3.30 A"/>
    <property type="chains" value="C=1218-1251"/>
</dbReference>
<dbReference type="PDB" id="4DRB">
    <property type="method" value="X-ray"/>
    <property type="resolution" value="2.63 A"/>
    <property type="chains" value="C/F/I=661-800"/>
</dbReference>
<dbReference type="PDB" id="4E45">
    <property type="method" value="X-ray"/>
    <property type="resolution" value="2.00 A"/>
    <property type="chains" value="E/J/O=667-800"/>
</dbReference>
<dbReference type="PDB" id="4M6W">
    <property type="method" value="X-ray"/>
    <property type="resolution" value="2.90 A"/>
    <property type="chains" value="A=1813-2031"/>
</dbReference>
<dbReference type="PDBsum" id="4BXO"/>
<dbReference type="PDBsum" id="4DAY"/>
<dbReference type="PDBsum" id="4DRB"/>
<dbReference type="PDBsum" id="4E45"/>
<dbReference type="PDBsum" id="4M6W"/>
<dbReference type="SMR" id="Q8IYD8"/>
<dbReference type="BioGRID" id="121722">
    <property type="interactions" value="67"/>
</dbReference>
<dbReference type="ComplexPortal" id="CPX-6266">
    <property type="entry name" value="Fanconi anemia FANCM-FAAP24-MHF anchoring complex"/>
</dbReference>
<dbReference type="CORUM" id="Q8IYD8"/>
<dbReference type="DIP" id="DIP-43972N"/>
<dbReference type="FunCoup" id="Q8IYD8">
    <property type="interactions" value="2873"/>
</dbReference>
<dbReference type="IntAct" id="Q8IYD8">
    <property type="interactions" value="51"/>
</dbReference>
<dbReference type="MINT" id="Q8IYD8"/>
<dbReference type="STRING" id="9606.ENSP00000267430"/>
<dbReference type="GlyCosmos" id="Q8IYD8">
    <property type="glycosylation" value="1 site, 1 glycan"/>
</dbReference>
<dbReference type="GlyGen" id="Q8IYD8">
    <property type="glycosylation" value="6 sites, 2 N-linked glycans (2 sites), 1 O-linked glycan (2 sites)"/>
</dbReference>
<dbReference type="iPTMnet" id="Q8IYD8"/>
<dbReference type="PhosphoSitePlus" id="Q8IYD8"/>
<dbReference type="BioMuta" id="FANCM"/>
<dbReference type="DMDM" id="78099254"/>
<dbReference type="jPOST" id="Q8IYD8"/>
<dbReference type="MassIVE" id="Q8IYD8"/>
<dbReference type="PaxDb" id="9606-ENSP00000267430"/>
<dbReference type="PeptideAtlas" id="Q8IYD8"/>
<dbReference type="ProteomicsDB" id="3447"/>
<dbReference type="ProteomicsDB" id="71158">
    <molecule id="Q8IYD8-1"/>
</dbReference>
<dbReference type="ProteomicsDB" id="71159">
    <molecule id="Q8IYD8-2"/>
</dbReference>
<dbReference type="Antibodypedia" id="23452">
    <property type="antibodies" value="220 antibodies from 30 providers"/>
</dbReference>
<dbReference type="DNASU" id="57697"/>
<dbReference type="Ensembl" id="ENST00000267430.10">
    <molecule id="Q8IYD8-1"/>
    <property type="protein sequence ID" value="ENSP00000267430.5"/>
    <property type="gene ID" value="ENSG00000187790.12"/>
</dbReference>
<dbReference type="Ensembl" id="ENST00000542564.6">
    <molecule id="Q8IYD8-3"/>
    <property type="protein sequence ID" value="ENSP00000442493.2"/>
    <property type="gene ID" value="ENSG00000187790.12"/>
</dbReference>
<dbReference type="Ensembl" id="ENST00000556036.6">
    <molecule id="Q8IYD8-2"/>
    <property type="protein sequence ID" value="ENSP00000450596.1"/>
    <property type="gene ID" value="ENSG00000187790.12"/>
</dbReference>
<dbReference type="GeneID" id="57697"/>
<dbReference type="KEGG" id="hsa:57697"/>
<dbReference type="MANE-Select" id="ENST00000267430.10">
    <property type="protein sequence ID" value="ENSP00000267430.5"/>
    <property type="RefSeq nucleotide sequence ID" value="NM_020937.4"/>
    <property type="RefSeq protein sequence ID" value="NP_065988.1"/>
</dbReference>
<dbReference type="UCSC" id="uc001wwc.3">
    <molecule id="Q8IYD8-1"/>
    <property type="organism name" value="human"/>
</dbReference>
<dbReference type="AGR" id="HGNC:23168"/>
<dbReference type="CTD" id="57697"/>
<dbReference type="DisGeNET" id="57697"/>
<dbReference type="GeneCards" id="FANCM"/>
<dbReference type="GeneReviews" id="FANCM"/>
<dbReference type="HGNC" id="HGNC:23168">
    <property type="gene designation" value="FANCM"/>
</dbReference>
<dbReference type="HPA" id="ENSG00000187790">
    <property type="expression patterns" value="Tissue enhanced (testis)"/>
</dbReference>
<dbReference type="MalaCards" id="FANCM"/>
<dbReference type="MIM" id="609644">
    <property type="type" value="gene"/>
</dbReference>
<dbReference type="MIM" id="618086">
    <property type="type" value="phenotype"/>
</dbReference>
<dbReference type="MIM" id="618096">
    <property type="type" value="phenotype"/>
</dbReference>
<dbReference type="neXtProt" id="NX_Q8IYD8"/>
<dbReference type="OpenTargets" id="ENSG00000187790"/>
<dbReference type="Orphanet" id="84">
    <property type="disease" value="Fanconi anemia"/>
</dbReference>
<dbReference type="Orphanet" id="399805">
    <property type="disease" value="Male infertility with azoospermia or oligozoospermia due to single gene mutation"/>
</dbReference>
<dbReference type="PharmGKB" id="PA134943156"/>
<dbReference type="VEuPathDB" id="HostDB:ENSG00000187790"/>
<dbReference type="eggNOG" id="KOG0354">
    <property type="taxonomic scope" value="Eukaryota"/>
</dbReference>
<dbReference type="eggNOG" id="KOG0442">
    <property type="taxonomic scope" value="Eukaryota"/>
</dbReference>
<dbReference type="GeneTree" id="ENSGT00940000156480"/>
<dbReference type="HOGENOM" id="CLU_002513_3_2_1"/>
<dbReference type="InParanoid" id="Q8IYD8"/>
<dbReference type="OMA" id="MQMLPND"/>
<dbReference type="OrthoDB" id="6513042at2759"/>
<dbReference type="PAN-GO" id="Q8IYD8">
    <property type="GO annotations" value="6 GO annotations based on evolutionary models"/>
</dbReference>
<dbReference type="PhylomeDB" id="Q8IYD8"/>
<dbReference type="TreeFam" id="TF324610"/>
<dbReference type="PathwayCommons" id="Q8IYD8"/>
<dbReference type="Reactome" id="R-HSA-6783310">
    <property type="pathway name" value="Fanconi Anemia Pathway"/>
</dbReference>
<dbReference type="Reactome" id="R-HSA-9833482">
    <property type="pathway name" value="PKR-mediated signaling"/>
</dbReference>
<dbReference type="SignaLink" id="Q8IYD8"/>
<dbReference type="SIGNOR" id="Q8IYD8"/>
<dbReference type="BioGRID-ORCS" id="57697">
    <property type="hits" value="160 hits in 1170 CRISPR screens"/>
</dbReference>
<dbReference type="ChiTaRS" id="FANCM">
    <property type="organism name" value="human"/>
</dbReference>
<dbReference type="EvolutionaryTrace" id="Q8IYD8"/>
<dbReference type="GenomeRNAi" id="57697"/>
<dbReference type="Pharos" id="Q8IYD8">
    <property type="development level" value="Tbio"/>
</dbReference>
<dbReference type="PRO" id="PR:Q8IYD8"/>
<dbReference type="Proteomes" id="UP000005640">
    <property type="component" value="Chromosome 14"/>
</dbReference>
<dbReference type="RNAct" id="Q8IYD8">
    <property type="molecule type" value="protein"/>
</dbReference>
<dbReference type="Bgee" id="ENSG00000187790">
    <property type="expression patterns" value="Expressed in sperm and 136 other cell types or tissues"/>
</dbReference>
<dbReference type="ExpressionAtlas" id="Q8IYD8">
    <property type="expression patterns" value="baseline and differential"/>
</dbReference>
<dbReference type="GO" id="GO:0000785">
    <property type="term" value="C:chromatin"/>
    <property type="evidence" value="ECO:0000314"/>
    <property type="project" value="ComplexPortal"/>
</dbReference>
<dbReference type="GO" id="GO:0005829">
    <property type="term" value="C:cytosol"/>
    <property type="evidence" value="ECO:0000304"/>
    <property type="project" value="Reactome"/>
</dbReference>
<dbReference type="GO" id="GO:0071821">
    <property type="term" value="C:FANCM-MHF complex"/>
    <property type="evidence" value="ECO:0000314"/>
    <property type="project" value="UniProtKB"/>
</dbReference>
<dbReference type="GO" id="GO:0043240">
    <property type="term" value="C:Fanconi anaemia nuclear complex"/>
    <property type="evidence" value="ECO:0000314"/>
    <property type="project" value="UniProtKB"/>
</dbReference>
<dbReference type="GO" id="GO:0005654">
    <property type="term" value="C:nucleoplasm"/>
    <property type="evidence" value="ECO:0000314"/>
    <property type="project" value="HPA"/>
</dbReference>
<dbReference type="GO" id="GO:0043138">
    <property type="term" value="F:3'-5' DNA helicase activity"/>
    <property type="evidence" value="ECO:0000318"/>
    <property type="project" value="GO_Central"/>
</dbReference>
<dbReference type="GO" id="GO:0005524">
    <property type="term" value="F:ATP binding"/>
    <property type="evidence" value="ECO:0007669"/>
    <property type="project" value="UniProtKB-KW"/>
</dbReference>
<dbReference type="GO" id="GO:0016887">
    <property type="term" value="F:ATP hydrolysis activity"/>
    <property type="evidence" value="ECO:0007669"/>
    <property type="project" value="RHEA"/>
</dbReference>
<dbReference type="GO" id="GO:0003682">
    <property type="term" value="F:chromatin binding"/>
    <property type="evidence" value="ECO:0000314"/>
    <property type="project" value="UniProtKB"/>
</dbReference>
<dbReference type="GO" id="GO:0000400">
    <property type="term" value="F:four-way junction DNA binding"/>
    <property type="evidence" value="ECO:0000318"/>
    <property type="project" value="GO_Central"/>
</dbReference>
<dbReference type="GO" id="GO:0009378">
    <property type="term" value="F:four-way junction helicase activity"/>
    <property type="evidence" value="ECO:0000318"/>
    <property type="project" value="GO_Central"/>
</dbReference>
<dbReference type="GO" id="GO:0004518">
    <property type="term" value="F:nuclease activity"/>
    <property type="evidence" value="ECO:0007669"/>
    <property type="project" value="InterPro"/>
</dbReference>
<dbReference type="GO" id="GO:0003724">
    <property type="term" value="F:RNA helicase activity"/>
    <property type="evidence" value="ECO:0007669"/>
    <property type="project" value="UniProtKB-EC"/>
</dbReference>
<dbReference type="GO" id="GO:0045003">
    <property type="term" value="P:double-strand break repair via synthesis-dependent strand annealing"/>
    <property type="evidence" value="ECO:0000318"/>
    <property type="project" value="GO_Central"/>
</dbReference>
<dbReference type="GO" id="GO:0036297">
    <property type="term" value="P:interstrand cross-link repair"/>
    <property type="evidence" value="ECO:0000314"/>
    <property type="project" value="ComplexPortal"/>
</dbReference>
<dbReference type="GO" id="GO:1902527">
    <property type="term" value="P:positive regulation of protein monoubiquitination"/>
    <property type="evidence" value="ECO:0000315"/>
    <property type="project" value="UniProtKB"/>
</dbReference>
<dbReference type="GO" id="GO:0031297">
    <property type="term" value="P:replication fork processing"/>
    <property type="evidence" value="ECO:0000315"/>
    <property type="project" value="UniProtKB"/>
</dbReference>
<dbReference type="GO" id="GO:0000712">
    <property type="term" value="P:resolution of meiotic recombination intermediates"/>
    <property type="evidence" value="ECO:0000315"/>
    <property type="project" value="UniProtKB"/>
</dbReference>
<dbReference type="CDD" id="cd18033">
    <property type="entry name" value="DEXDc_FANCM"/>
    <property type="match status" value="1"/>
</dbReference>
<dbReference type="CDD" id="cd12091">
    <property type="entry name" value="FANCM_ID"/>
    <property type="match status" value="1"/>
</dbReference>
<dbReference type="CDD" id="cd18801">
    <property type="entry name" value="SF2_C_FANCM_Hef"/>
    <property type="match status" value="1"/>
</dbReference>
<dbReference type="CDD" id="cd20077">
    <property type="entry name" value="XPF_nuclease_FANCM"/>
    <property type="match status" value="1"/>
</dbReference>
<dbReference type="FunFam" id="3.40.50.300:FF:001333">
    <property type="entry name" value="FA complementation group M"/>
    <property type="match status" value="1"/>
</dbReference>
<dbReference type="FunFam" id="1.10.150.20:FF:000048">
    <property type="entry name" value="Fanconi anemia, complementation group M"/>
    <property type="match status" value="1"/>
</dbReference>
<dbReference type="FunFam" id="1.20.1320.20:FF:000001">
    <property type="entry name" value="Fanconi anemia, complementation group M"/>
    <property type="match status" value="1"/>
</dbReference>
<dbReference type="FunFam" id="3.40.50.10130:FF:000004">
    <property type="entry name" value="Fanconi anemia, complementation group M"/>
    <property type="match status" value="1"/>
</dbReference>
<dbReference type="FunFam" id="3.40.50.300:FF:000861">
    <property type="entry name" value="Fanconi anemia, complementation group M"/>
    <property type="match status" value="1"/>
</dbReference>
<dbReference type="Gene3D" id="3.40.50.10130">
    <property type="match status" value="1"/>
</dbReference>
<dbReference type="Gene3D" id="1.10.150.20">
    <property type="entry name" value="5' to 3' exonuclease, C-terminal subdomain"/>
    <property type="match status" value="1"/>
</dbReference>
<dbReference type="Gene3D" id="1.20.1320.20">
    <property type="entry name" value="hef helicase domain"/>
    <property type="match status" value="1"/>
</dbReference>
<dbReference type="Gene3D" id="3.40.50.300">
    <property type="entry name" value="P-loop containing nucleotide triphosphate hydrolases"/>
    <property type="match status" value="2"/>
</dbReference>
<dbReference type="IDEAL" id="IID00484"/>
<dbReference type="InterPro" id="IPR011545">
    <property type="entry name" value="DEAD/DEAH_box_helicase_dom"/>
</dbReference>
<dbReference type="InterPro" id="IPR006166">
    <property type="entry name" value="ERCC4_domain"/>
</dbReference>
<dbReference type="InterPro" id="IPR031879">
    <property type="entry name" value="FANCM-MHF-bd"/>
</dbReference>
<dbReference type="InterPro" id="IPR039686">
    <property type="entry name" value="FANCM/Mph1-like_ID"/>
</dbReference>
<dbReference type="InterPro" id="IPR044749">
    <property type="entry name" value="FANCM_DEXDc"/>
</dbReference>
<dbReference type="InterPro" id="IPR014001">
    <property type="entry name" value="Helicase_ATP-bd"/>
</dbReference>
<dbReference type="InterPro" id="IPR001650">
    <property type="entry name" value="Helicase_C-like"/>
</dbReference>
<dbReference type="InterPro" id="IPR027417">
    <property type="entry name" value="P-loop_NTPase"/>
</dbReference>
<dbReference type="InterPro" id="IPR011335">
    <property type="entry name" value="Restrct_endonuc-II-like"/>
</dbReference>
<dbReference type="InterPro" id="IPR010994">
    <property type="entry name" value="RuvA_2-like"/>
</dbReference>
<dbReference type="InterPro" id="IPR047418">
    <property type="entry name" value="XPF_nuclease_FANCM"/>
</dbReference>
<dbReference type="PANTHER" id="PTHR14025">
    <property type="entry name" value="FANCONI ANEMIA GROUP M FANCM FAMILY MEMBER"/>
    <property type="match status" value="1"/>
</dbReference>
<dbReference type="PANTHER" id="PTHR14025:SF20">
    <property type="entry name" value="FANCONI ANEMIA GROUP M PROTEIN"/>
    <property type="match status" value="1"/>
</dbReference>
<dbReference type="Pfam" id="PF00270">
    <property type="entry name" value="DEAD"/>
    <property type="match status" value="1"/>
</dbReference>
<dbReference type="Pfam" id="PF02732">
    <property type="entry name" value="ERCC4"/>
    <property type="match status" value="1"/>
</dbReference>
<dbReference type="Pfam" id="PF16783">
    <property type="entry name" value="FANCM-MHF_bd"/>
    <property type="match status" value="1"/>
</dbReference>
<dbReference type="Pfam" id="PF00271">
    <property type="entry name" value="Helicase_C"/>
    <property type="match status" value="1"/>
</dbReference>
<dbReference type="SMART" id="SM00487">
    <property type="entry name" value="DEXDc"/>
    <property type="match status" value="1"/>
</dbReference>
<dbReference type="SMART" id="SM00891">
    <property type="entry name" value="ERCC4"/>
    <property type="match status" value="1"/>
</dbReference>
<dbReference type="SMART" id="SM00490">
    <property type="entry name" value="HELICc"/>
    <property type="match status" value="1"/>
</dbReference>
<dbReference type="SUPFAM" id="SSF52540">
    <property type="entry name" value="P-loop containing nucleoside triphosphate hydrolases"/>
    <property type="match status" value="1"/>
</dbReference>
<dbReference type="SUPFAM" id="SSF52980">
    <property type="entry name" value="Restriction endonuclease-like"/>
    <property type="match status" value="1"/>
</dbReference>
<dbReference type="SUPFAM" id="SSF47781">
    <property type="entry name" value="RuvA domain 2-like"/>
    <property type="match status" value="1"/>
</dbReference>
<dbReference type="PROSITE" id="PS51192">
    <property type="entry name" value="HELICASE_ATP_BIND_1"/>
    <property type="match status" value="1"/>
</dbReference>
<dbReference type="PROSITE" id="PS51194">
    <property type="entry name" value="HELICASE_CTER"/>
    <property type="match status" value="1"/>
</dbReference>
<feature type="chain" id="PRO_0000055176" description="Fanconi anemia group M protein">
    <location>
        <begin position="1"/>
        <end position="2048"/>
    </location>
</feature>
<feature type="domain" description="Helicase ATP-binding" evidence="1">
    <location>
        <begin position="98"/>
        <end position="266"/>
    </location>
</feature>
<feature type="domain" description="Helicase C-terminal" evidence="2">
    <location>
        <begin position="452"/>
        <end position="627"/>
    </location>
</feature>
<feature type="region of interest" description="Disordered" evidence="3">
    <location>
        <begin position="1"/>
        <end position="45"/>
    </location>
</feature>
<feature type="region of interest" description="Interaction with CENPS/CENPSX" evidence="9">
    <location>
        <begin position="661"/>
        <end position="800"/>
    </location>
</feature>
<feature type="region of interest" description="Disordered" evidence="3">
    <location>
        <begin position="1433"/>
        <end position="1476"/>
    </location>
</feature>
<feature type="region of interest" description="Disordered" evidence="3">
    <location>
        <begin position="1518"/>
        <end position="1540"/>
    </location>
</feature>
<feature type="region of interest" description="Disordered" evidence="3">
    <location>
        <begin position="1668"/>
        <end position="1809"/>
    </location>
</feature>
<feature type="region of interest" description="Interaction with FAAP24" evidence="7">
    <location>
        <begin position="1727"/>
        <end position="2048"/>
    </location>
</feature>
<feature type="short sequence motif" description="DEAH box" evidence="1">
    <location>
        <begin position="214"/>
        <end position="217"/>
    </location>
</feature>
<feature type="compositionally biased region" description="Polar residues" evidence="3">
    <location>
        <begin position="1"/>
        <end position="37"/>
    </location>
</feature>
<feature type="compositionally biased region" description="Acidic residues" evidence="3">
    <location>
        <begin position="1518"/>
        <end position="1538"/>
    </location>
</feature>
<feature type="compositionally biased region" description="Polar residues" evidence="3">
    <location>
        <begin position="1703"/>
        <end position="1745"/>
    </location>
</feature>
<feature type="compositionally biased region" description="Polar residues" evidence="3">
    <location>
        <begin position="1753"/>
        <end position="1767"/>
    </location>
</feature>
<feature type="compositionally biased region" description="Polar residues" evidence="3">
    <location>
        <begin position="1786"/>
        <end position="1797"/>
    </location>
</feature>
<feature type="binding site" evidence="1">
    <location>
        <begin position="111"/>
        <end position="118"/>
    </location>
    <ligand>
        <name>ATP</name>
        <dbReference type="ChEBI" id="CHEBI:30616"/>
    </ligand>
</feature>
<feature type="modified residue" description="Phosphoserine" evidence="19">
    <location>
        <position position="34"/>
    </location>
</feature>
<feature type="modified residue" description="Phosphoserine" evidence="19">
    <location>
        <position position="1673"/>
    </location>
</feature>
<feature type="modified residue" description="Phosphoserine" evidence="19">
    <location>
        <position position="1674"/>
    </location>
</feature>
<feature type="splice variant" id="VSP_054504" description="In isoform 3." evidence="15">
    <location>
        <begin position="228"/>
        <end position="253"/>
    </location>
</feature>
<feature type="splice variant" id="VSP_015989" description="In isoform 2." evidence="14 15">
    <original>M</original>
    <variation>K</variation>
    <location>
        <position position="669"/>
    </location>
</feature>
<feature type="splice variant" id="VSP_015990" description="In isoform 2." evidence="14 15">
    <location>
        <begin position="670"/>
        <end position="2048"/>
    </location>
</feature>
<feature type="sequence variant" id="VAR_023697" description="In dbSNP:rs10138997.">
    <original>S</original>
    <variation>F</variation>
    <location>
        <position position="175"/>
    </location>
</feature>
<feature type="sequence variant" id="VAR_061827" description="In dbSNP:rs45547534.">
    <original>I</original>
    <variation>M</variation>
    <location>
        <position position="208"/>
    </location>
</feature>
<feature type="sequence variant" id="VAR_023698" description="In dbSNP:rs1367580." evidence="4">
    <original>V</original>
    <variation>L</variation>
    <location>
        <position position="878"/>
    </location>
</feature>
<feature type="sequence variant" id="VAR_081138" description="In POF15 and SPGF28; loss-of-function mutation resulting in impaired FANCD2 monoubiquitination in response to DNA damage." evidence="11 13">
    <location>
        <begin position="1701"/>
        <end position="2048"/>
    </location>
</feature>
<feature type="sequence variant" id="VAR_023699" description="In dbSNP:rs3736772." evidence="4">
    <original>P</original>
    <variation>A</variation>
    <location>
        <position position="1812"/>
    </location>
</feature>
<feature type="sequence variant" id="VAR_081139" description="In SPGF28; uncertain significance." evidence="13">
    <location>
        <begin position="1931"/>
        <end position="2048"/>
    </location>
</feature>
<feature type="mutagenesis site" description="Reduces ATPase activity." evidence="6">
    <original>G</original>
    <variation>A</variation>
    <location>
        <position position="116"/>
    </location>
</feature>
<feature type="mutagenesis site" description="Abolishes ATPase activity. Loss of DNA branch migration activity, even in the presence of CENPS/CENPX. Loss of cross-linker resistance. No effect on FAAP24-binding, nor on FANCD2 and FANCI monoubiquitination." evidence="5 7 8 10">
    <original>K</original>
    <variation>R</variation>
    <location>
        <position position="117"/>
    </location>
</feature>
<feature type="sequence conflict" description="In Ref. 2; BAC04159." evidence="18" ref="2">
    <original>L</original>
    <variation>F</variation>
    <location>
        <position position="68"/>
    </location>
</feature>
<feature type="sequence conflict" description="In Ref. 5; BAB13422." evidence="18" ref="5">
    <original>I</original>
    <variation>V</variation>
    <location>
        <position position="1460"/>
    </location>
</feature>
<feature type="helix" evidence="22">
    <location>
        <begin position="682"/>
        <end position="691"/>
    </location>
</feature>
<feature type="strand" evidence="21">
    <location>
        <begin position="698"/>
        <end position="700"/>
    </location>
</feature>
<feature type="strand" evidence="22">
    <location>
        <begin position="702"/>
        <end position="704"/>
    </location>
</feature>
<feature type="turn" evidence="21">
    <location>
        <begin position="711"/>
        <end position="713"/>
    </location>
</feature>
<feature type="strand" evidence="22">
    <location>
        <begin position="728"/>
        <end position="730"/>
    </location>
</feature>
<feature type="helix" evidence="22">
    <location>
        <begin position="737"/>
        <end position="739"/>
    </location>
</feature>
<feature type="strand" evidence="22">
    <location>
        <begin position="747"/>
        <end position="749"/>
    </location>
</feature>
<feature type="helix" evidence="22">
    <location>
        <begin position="753"/>
        <end position="768"/>
    </location>
</feature>
<feature type="helix" evidence="22">
    <location>
        <begin position="776"/>
        <end position="781"/>
    </location>
</feature>
<feature type="helix" evidence="22">
    <location>
        <begin position="782"/>
        <end position="784"/>
    </location>
</feature>
<feature type="helix" evidence="22">
    <location>
        <begin position="787"/>
        <end position="789"/>
    </location>
</feature>
<feature type="strand" evidence="20">
    <location>
        <begin position="1819"/>
        <end position="1823"/>
    </location>
</feature>
<feature type="helix" evidence="20">
    <location>
        <begin position="1826"/>
        <end position="1829"/>
    </location>
</feature>
<feature type="helix" evidence="20">
    <location>
        <begin position="1831"/>
        <end position="1838"/>
    </location>
</feature>
<feature type="strand" evidence="20">
    <location>
        <begin position="1844"/>
        <end position="1848"/>
    </location>
</feature>
<feature type="strand" evidence="23">
    <location>
        <begin position="1854"/>
        <end position="1856"/>
    </location>
</feature>
<feature type="strand" evidence="20">
    <location>
        <begin position="1858"/>
        <end position="1867"/>
    </location>
</feature>
<feature type="helix" evidence="20">
    <location>
        <begin position="1868"/>
        <end position="1872"/>
    </location>
</feature>
<feature type="helix" evidence="20">
    <location>
        <begin position="1877"/>
        <end position="1888"/>
    </location>
</feature>
<feature type="strand" evidence="20">
    <location>
        <begin position="1892"/>
        <end position="1899"/>
    </location>
</feature>
<feature type="helix" evidence="20">
    <location>
        <begin position="1916"/>
        <end position="1927"/>
    </location>
</feature>
<feature type="strand" evidence="20">
    <location>
        <begin position="1931"/>
        <end position="1937"/>
    </location>
</feature>
<feature type="helix" evidence="20">
    <location>
        <begin position="1938"/>
        <end position="1954"/>
    </location>
</feature>
<feature type="helix" evidence="20">
    <location>
        <begin position="1970"/>
        <end position="1977"/>
    </location>
</feature>
<feature type="helix" evidence="20">
    <location>
        <begin position="1984"/>
        <end position="1993"/>
    </location>
</feature>
<feature type="helix" evidence="20">
    <location>
        <begin position="1997"/>
        <end position="2001"/>
    </location>
</feature>
<feature type="helix" evidence="20">
    <location>
        <begin position="2005"/>
        <end position="2012"/>
    </location>
</feature>
<feature type="helix" evidence="20">
    <location>
        <begin position="2016"/>
        <end position="2027"/>
    </location>
</feature>
<feature type="helix" evidence="20">
    <location>
        <begin position="2032"/>
        <end position="2034"/>
    </location>
</feature>
<reference key="1">
    <citation type="journal article" date="2005" name="Nat. Genet.">
        <title>A human ortholog of archaeal DNA repair protein Hef is defective in Fanconi anemia complementation group M.</title>
        <authorList>
            <person name="Meetei A.R."/>
            <person name="Medhurst A.L."/>
            <person name="Ling C."/>
            <person name="Xue Y."/>
            <person name="Singh T.R."/>
            <person name="Bier P."/>
            <person name="Steltenpool J."/>
            <person name="Stone S."/>
            <person name="Dokal I."/>
            <person name="Mathew C.G."/>
            <person name="Hoatlin M."/>
            <person name="Joenje H."/>
            <person name="de Winter J.P."/>
            <person name="Wang W."/>
        </authorList>
    </citation>
    <scope>NUCLEOTIDE SEQUENCE [MRNA] (ISOFORM 1)</scope>
    <scope>IDENTIFICATION BY MASS SPECTROMETRY</scope>
    <scope>IDENTIFICATION IN THE FA CORE COMPLEX</scope>
    <scope>SUBCELLULAR LOCATION</scope>
    <scope>PHOSPHORYLATION</scope>
    <scope>FUNCTION</scope>
    <scope>MUTAGENESIS OF LYS-117</scope>
    <scope>CATALYTIC ACTIVITY</scope>
</reference>
<reference key="2">
    <citation type="journal article" date="2004" name="Nat. Genet.">
        <title>Complete sequencing and characterization of 21,243 full-length human cDNAs.</title>
        <authorList>
            <person name="Ota T."/>
            <person name="Suzuki Y."/>
            <person name="Nishikawa T."/>
            <person name="Otsuki T."/>
            <person name="Sugiyama T."/>
            <person name="Irie R."/>
            <person name="Wakamatsu A."/>
            <person name="Hayashi K."/>
            <person name="Sato H."/>
            <person name="Nagai K."/>
            <person name="Kimura K."/>
            <person name="Makita H."/>
            <person name="Sekine M."/>
            <person name="Obayashi M."/>
            <person name="Nishi T."/>
            <person name="Shibahara T."/>
            <person name="Tanaka T."/>
            <person name="Ishii S."/>
            <person name="Yamamoto J."/>
            <person name="Saito K."/>
            <person name="Kawai Y."/>
            <person name="Isono Y."/>
            <person name="Nakamura Y."/>
            <person name="Nagahari K."/>
            <person name="Murakami K."/>
            <person name="Yasuda T."/>
            <person name="Iwayanagi T."/>
            <person name="Wagatsuma M."/>
            <person name="Shiratori A."/>
            <person name="Sudo H."/>
            <person name="Hosoiri T."/>
            <person name="Kaku Y."/>
            <person name="Kodaira H."/>
            <person name="Kondo H."/>
            <person name="Sugawara M."/>
            <person name="Takahashi M."/>
            <person name="Kanda K."/>
            <person name="Yokoi T."/>
            <person name="Furuya T."/>
            <person name="Kikkawa E."/>
            <person name="Omura Y."/>
            <person name="Abe K."/>
            <person name="Kamihara K."/>
            <person name="Katsuta N."/>
            <person name="Sato K."/>
            <person name="Tanikawa M."/>
            <person name="Yamazaki M."/>
            <person name="Ninomiya K."/>
            <person name="Ishibashi T."/>
            <person name="Yamashita H."/>
            <person name="Murakawa K."/>
            <person name="Fujimori K."/>
            <person name="Tanai H."/>
            <person name="Kimata M."/>
            <person name="Watanabe M."/>
            <person name="Hiraoka S."/>
            <person name="Chiba Y."/>
            <person name="Ishida S."/>
            <person name="Ono Y."/>
            <person name="Takiguchi S."/>
            <person name="Watanabe S."/>
            <person name="Yosida M."/>
            <person name="Hotuta T."/>
            <person name="Kusano J."/>
            <person name="Kanehori K."/>
            <person name="Takahashi-Fujii A."/>
            <person name="Hara H."/>
            <person name="Tanase T.-O."/>
            <person name="Nomura Y."/>
            <person name="Togiya S."/>
            <person name="Komai F."/>
            <person name="Hara R."/>
            <person name="Takeuchi K."/>
            <person name="Arita M."/>
            <person name="Imose N."/>
            <person name="Musashino K."/>
            <person name="Yuuki H."/>
            <person name="Oshima A."/>
            <person name="Sasaki N."/>
            <person name="Aotsuka S."/>
            <person name="Yoshikawa Y."/>
            <person name="Matsunawa H."/>
            <person name="Ichihara T."/>
            <person name="Shiohata N."/>
            <person name="Sano S."/>
            <person name="Moriya S."/>
            <person name="Momiyama H."/>
            <person name="Satoh N."/>
            <person name="Takami S."/>
            <person name="Terashima Y."/>
            <person name="Suzuki O."/>
            <person name="Nakagawa S."/>
            <person name="Senoh A."/>
            <person name="Mizoguchi H."/>
            <person name="Goto Y."/>
            <person name="Shimizu F."/>
            <person name="Wakebe H."/>
            <person name="Hishigaki H."/>
            <person name="Watanabe T."/>
            <person name="Sugiyama A."/>
            <person name="Takemoto M."/>
            <person name="Kawakami B."/>
            <person name="Yamazaki M."/>
            <person name="Watanabe K."/>
            <person name="Kumagai A."/>
            <person name="Itakura S."/>
            <person name="Fukuzumi Y."/>
            <person name="Fujimori Y."/>
            <person name="Komiyama M."/>
            <person name="Tashiro H."/>
            <person name="Tanigami A."/>
            <person name="Fujiwara T."/>
            <person name="Ono T."/>
            <person name="Yamada K."/>
            <person name="Fujii Y."/>
            <person name="Ozaki K."/>
            <person name="Hirao M."/>
            <person name="Ohmori Y."/>
            <person name="Kawabata A."/>
            <person name="Hikiji T."/>
            <person name="Kobatake N."/>
            <person name="Inagaki H."/>
            <person name="Ikema Y."/>
            <person name="Okamoto S."/>
            <person name="Okitani R."/>
            <person name="Kawakami T."/>
            <person name="Noguchi S."/>
            <person name="Itoh T."/>
            <person name="Shigeta K."/>
            <person name="Senba T."/>
            <person name="Matsumura K."/>
            <person name="Nakajima Y."/>
            <person name="Mizuno T."/>
            <person name="Morinaga M."/>
            <person name="Sasaki M."/>
            <person name="Togashi T."/>
            <person name="Oyama M."/>
            <person name="Hata H."/>
            <person name="Watanabe M."/>
            <person name="Komatsu T."/>
            <person name="Mizushima-Sugano J."/>
            <person name="Satoh T."/>
            <person name="Shirai Y."/>
            <person name="Takahashi Y."/>
            <person name="Nakagawa K."/>
            <person name="Okumura K."/>
            <person name="Nagase T."/>
            <person name="Nomura N."/>
            <person name="Kikuchi H."/>
            <person name="Masuho Y."/>
            <person name="Yamashita R."/>
            <person name="Nakai K."/>
            <person name="Yada T."/>
            <person name="Nakamura Y."/>
            <person name="Ohara O."/>
            <person name="Isogai T."/>
            <person name="Sugano S."/>
        </authorList>
    </citation>
    <scope>NUCLEOTIDE SEQUENCE [LARGE SCALE MRNA] (ISOFORM 2)</scope>
    <source>
        <tissue>Testis</tissue>
    </source>
</reference>
<reference key="3">
    <citation type="journal article" date="2003" name="Nature">
        <title>The DNA sequence and analysis of human chromosome 14.</title>
        <authorList>
            <person name="Heilig R."/>
            <person name="Eckenberg R."/>
            <person name="Petit J.-L."/>
            <person name="Fonknechten N."/>
            <person name="Da Silva C."/>
            <person name="Cattolico L."/>
            <person name="Levy M."/>
            <person name="Barbe V."/>
            <person name="De Berardinis V."/>
            <person name="Ureta-Vidal A."/>
            <person name="Pelletier E."/>
            <person name="Vico V."/>
            <person name="Anthouard V."/>
            <person name="Rowen L."/>
            <person name="Madan A."/>
            <person name="Qin S."/>
            <person name="Sun H."/>
            <person name="Du H."/>
            <person name="Pepin K."/>
            <person name="Artiguenave F."/>
            <person name="Robert C."/>
            <person name="Cruaud C."/>
            <person name="Bruels T."/>
            <person name="Jaillon O."/>
            <person name="Friedlander L."/>
            <person name="Samson G."/>
            <person name="Brottier P."/>
            <person name="Cure S."/>
            <person name="Segurens B."/>
            <person name="Aniere F."/>
            <person name="Samain S."/>
            <person name="Crespeau H."/>
            <person name="Abbasi N."/>
            <person name="Aiach N."/>
            <person name="Boscus D."/>
            <person name="Dickhoff R."/>
            <person name="Dors M."/>
            <person name="Dubois I."/>
            <person name="Friedman C."/>
            <person name="Gouyvenoux M."/>
            <person name="James R."/>
            <person name="Madan A."/>
            <person name="Mairey-Estrada B."/>
            <person name="Mangenot S."/>
            <person name="Martins N."/>
            <person name="Menard M."/>
            <person name="Oztas S."/>
            <person name="Ratcliffe A."/>
            <person name="Shaffer T."/>
            <person name="Trask B."/>
            <person name="Vacherie B."/>
            <person name="Bellemere C."/>
            <person name="Belser C."/>
            <person name="Besnard-Gonnet M."/>
            <person name="Bartol-Mavel D."/>
            <person name="Boutard M."/>
            <person name="Briez-Silla S."/>
            <person name="Combette S."/>
            <person name="Dufosse-Laurent V."/>
            <person name="Ferron C."/>
            <person name="Lechaplais C."/>
            <person name="Louesse C."/>
            <person name="Muselet D."/>
            <person name="Magdelenat G."/>
            <person name="Pateau E."/>
            <person name="Petit E."/>
            <person name="Sirvain-Trukniewicz P."/>
            <person name="Trybou A."/>
            <person name="Vega-Czarny N."/>
            <person name="Bataille E."/>
            <person name="Bluet E."/>
            <person name="Bordelais I."/>
            <person name="Dubois M."/>
            <person name="Dumont C."/>
            <person name="Guerin T."/>
            <person name="Haffray S."/>
            <person name="Hammadi R."/>
            <person name="Muanga J."/>
            <person name="Pellouin V."/>
            <person name="Robert D."/>
            <person name="Wunderle E."/>
            <person name="Gauguet G."/>
            <person name="Roy A."/>
            <person name="Sainte-Marthe L."/>
            <person name="Verdier J."/>
            <person name="Verdier-Discala C."/>
            <person name="Hillier L.W."/>
            <person name="Fulton L."/>
            <person name="McPherson J."/>
            <person name="Matsuda F."/>
            <person name="Wilson R."/>
            <person name="Scarpelli C."/>
            <person name="Gyapay G."/>
            <person name="Wincker P."/>
            <person name="Saurin W."/>
            <person name="Quetier F."/>
            <person name="Waterston R."/>
            <person name="Hood L."/>
            <person name="Weissenbach J."/>
        </authorList>
    </citation>
    <scope>NUCLEOTIDE SEQUENCE [LARGE SCALE GENOMIC DNA]</scope>
</reference>
<reference key="4">
    <citation type="journal article" date="2004" name="Genome Res.">
        <title>The status, quality, and expansion of the NIH full-length cDNA project: the Mammalian Gene Collection (MGC).</title>
        <authorList>
            <consortium name="The MGC Project Team"/>
        </authorList>
    </citation>
    <scope>NUCLEOTIDE SEQUENCE [LARGE SCALE MRNA] (ISOFORMS 2 AND 3)</scope>
    <source>
        <tissue>Brain</tissue>
        <tissue>Testis</tissue>
    </source>
</reference>
<reference key="5">
    <citation type="journal article" date="2000" name="DNA Res.">
        <title>Prediction of the coding sequences of unidentified human genes. XVIII. The complete sequences of 100 new cDNA clones from brain which code for large proteins in vitro.</title>
        <authorList>
            <person name="Nagase T."/>
            <person name="Kikuno R."/>
            <person name="Nakayama M."/>
            <person name="Hirosawa M."/>
            <person name="Ohara O."/>
        </authorList>
    </citation>
    <scope>NUCLEOTIDE SEQUENCE [LARGE SCALE MRNA] OF 794-2048 (ISOFORM 1)</scope>
    <scope>VARIANTS LEU-878 AND ALA-1812</scope>
    <source>
        <tissue>Brain</tissue>
    </source>
</reference>
<reference key="6">
    <citation type="journal article" date="2005" name="Nat. Struct. Mol. Biol.">
        <title>The vertebrate Hef ortholog is a component of the Fanconi anemia tumor-suppressor pathway.</title>
        <authorList>
            <person name="Mosedale G."/>
            <person name="Niedzwiedz W."/>
            <person name="Alpi A."/>
            <person name="Perrina F."/>
            <person name="Pereira-Leal J.B."/>
            <person name="Johnson M."/>
            <person name="Langevin F."/>
            <person name="Pace P."/>
            <person name="Patel K.J."/>
        </authorList>
    </citation>
    <scope>FUNCTION</scope>
    <scope>DNA-BINDING</scope>
    <scope>MUTAGENESIS OF GLY-116</scope>
    <scope>IDENTIFICATION IN THE FA CORE COMPLEX</scope>
</reference>
<reference key="7">
    <citation type="journal article" date="2007" name="Mol. Cell">
        <title>Identification of FAAP24, a Fanconi anemia core complex protein that interacts with FANCM.</title>
        <authorList>
            <person name="Ciccia A."/>
            <person name="Ling C."/>
            <person name="Coulthard R."/>
            <person name="Yan Z."/>
            <person name="Xue Y."/>
            <person name="Meetei A.R."/>
            <person name="Laghmani el H."/>
            <person name="Joenje H."/>
            <person name="McDonald N."/>
            <person name="de Winter J.P."/>
            <person name="Wang W."/>
            <person name="West S.C."/>
        </authorList>
    </citation>
    <scope>IDENTIFICATION IN THE FA CORE COMPLEX</scope>
    <scope>INTERACTION WITH FAAP24</scope>
    <scope>MUTAGENESIS OF LYS-117</scope>
    <scope>CATALYTIC ACTIVITY</scope>
</reference>
<reference key="8">
    <citation type="journal article" date="2009" name="Blood">
        <title>Impaired FANCD2 monoubiquitination and hypersensitivity to camptothecin uniquely characterize Fanconi anemia complementation group M.</title>
        <authorList>
            <person name="Singh T.R."/>
            <person name="Bakker S.T."/>
            <person name="Agarwal S."/>
            <person name="Jansen M."/>
            <person name="Grassman E."/>
            <person name="Godthelp B.C."/>
            <person name="Ali A.M."/>
            <person name="Du C.H."/>
            <person name="Rooimans M.A."/>
            <person name="Fan Q."/>
            <person name="Wahengbam K."/>
            <person name="Steltenpool J."/>
            <person name="Andreassen P.R."/>
            <person name="Williams D.A."/>
            <person name="Joenje H."/>
            <person name="de Winter J.P."/>
            <person name="Meetei A.R."/>
        </authorList>
    </citation>
    <scope>FUNCTION</scope>
    <scope>MUTAGENESIS OF LYS-117</scope>
    <scope>CATALYTIC ACTIVITY</scope>
</reference>
<reference key="9">
    <citation type="journal article" date="2010" name="Mol. Cell">
        <title>A histone-fold complex and FANCM form a conserved DNA-remodeling complex to maintain genome stability.</title>
        <authorList>
            <person name="Yan Z."/>
            <person name="Delannoy M."/>
            <person name="Ling C."/>
            <person name="Daee D."/>
            <person name="Osman F."/>
            <person name="Muniandy P.A."/>
            <person name="Shen X."/>
            <person name="Oostra A.B."/>
            <person name="Du H."/>
            <person name="Steltenpool J."/>
            <person name="Lin T."/>
            <person name="Schuster B."/>
            <person name="Decaillet C."/>
            <person name="Stasiak A."/>
            <person name="Stasiak A.Z."/>
            <person name="Stone S."/>
            <person name="Hoatlin M.E."/>
            <person name="Schindler D."/>
            <person name="Woodcock C.L."/>
            <person name="Joenje H."/>
            <person name="Sen R."/>
            <person name="de Winter J.P."/>
            <person name="Li L."/>
            <person name="Seidman M.M."/>
            <person name="Whitby M.C."/>
            <person name="Myung K."/>
            <person name="Constantinousend A."/>
            <person name="Wang W."/>
        </authorList>
    </citation>
    <scope>IDENTIFICATION IN THE FA CORE COMPLEX</scope>
    <scope>IDENTIFICATION IN THE BRAFT COMPLEX</scope>
    <scope>INTERACTION WITH CENPS; CENPX AND FAAP24</scope>
    <scope>SUBCELLULAR LOCATION</scope>
    <scope>FUNCTION</scope>
</reference>
<reference key="10">
    <citation type="journal article" date="2010" name="Mol. Cell">
        <title>MHF1-MHF2, a histone-fold-containing protein complex, participates in the Fanconi anemia pathway via FANCM.</title>
        <authorList>
            <person name="Singh T.R."/>
            <person name="Saro D."/>
            <person name="Ali A.M."/>
            <person name="Zheng X.-F."/>
            <person name="Du C."/>
            <person name="Killen M.W."/>
            <person name="Sachpatzidis A."/>
            <person name="Wahengbam K."/>
            <person name="Pierce A.J."/>
            <person name="Xiong Y."/>
            <person name="Sung P."/>
            <person name="Meetei A.R."/>
        </authorList>
    </citation>
    <scope>IDENTIFICATION IN THE FA CORE COMPLEX</scope>
    <scope>INTERACTION WITH CENPS</scope>
    <scope>SUBCELLULAR LOCATION</scope>
    <scope>FUNCTION</scope>
    <scope>MUTAGENESIS OF LYS-117</scope>
    <scope>CATALYTIC ACTIVITY</scope>
</reference>
<reference key="11">
    <citation type="journal article" date="2013" name="J. Proteome Res.">
        <title>Toward a comprehensive characterization of a human cancer cell phosphoproteome.</title>
        <authorList>
            <person name="Zhou H."/>
            <person name="Di Palma S."/>
            <person name="Preisinger C."/>
            <person name="Peng M."/>
            <person name="Polat A.N."/>
            <person name="Heck A.J."/>
            <person name="Mohammed S."/>
        </authorList>
    </citation>
    <scope>PHOSPHORYLATION [LARGE SCALE ANALYSIS] AT SER-34; SER-1673 AND SER-1674</scope>
    <scope>IDENTIFICATION BY MASS SPECTROMETRY [LARGE SCALE ANALYSIS]</scope>
    <source>
        <tissue>Cervix carcinoma</tissue>
        <tissue>Erythroleukemia</tissue>
    </source>
</reference>
<reference key="12">
    <citation type="journal article" date="2017" name="Elife">
        <title>A homozygous FANCM mutation underlies a familial case of non-syndromic primary ovarian insufficiency.</title>
        <authorList>
            <person name="Fouquet B."/>
            <person name="Pawlikowska P."/>
            <person name="Caburet S."/>
            <person name="Guigon C."/>
            <person name="Maekinen M."/>
            <person name="Tanner L."/>
            <person name="Hietala M."/>
            <person name="Urbanska K."/>
            <person name="Bellutti L."/>
            <person name="Legois B."/>
            <person name="Bessieres B."/>
            <person name="Gougeon A."/>
            <person name="Benachi A."/>
            <person name="Livera G."/>
            <person name="Rosselli F."/>
            <person name="Veitia R.A."/>
            <person name="Misrahi M."/>
        </authorList>
    </citation>
    <scope>FUNCTION</scope>
    <scope>SUBCELLULAR LOCATION</scope>
    <scope>TISSUE SPECIFICITY</scope>
    <scope>DEVELOPMENTAL STAGE</scope>
    <scope>INVOLVEMENT IN POF15</scope>
    <scope>VARIANT POF15 1701-GLN--ILE-2048 DEL</scope>
    <scope>CHARACTERIZATION OF VARIANT POF15 1701-GLN--ILE-2048 DEL</scope>
</reference>
<reference key="13">
    <citation type="journal article" date="2018" name="Am. J. Hum. Genet.">
        <title>Bi-allelic recessive loss-of-function variants in FANCM cause non-obstructive azoospermia.</title>
        <authorList>
            <consortium name="GEMINI Consortium"/>
            <person name="Kasak L."/>
            <person name="Punab M."/>
            <person name="Nagirnaja L."/>
            <person name="Grigorova M."/>
            <person name="Minajeva A."/>
            <person name="Lopes A.M."/>
            <person name="Punab A.M."/>
            <person name="Aston K.I."/>
            <person name="Carvalho F."/>
            <person name="Laasik E."/>
            <person name="Smith L.B."/>
            <person name="Conrad D.F."/>
            <person name="Laan M."/>
        </authorList>
    </citation>
    <scope>TISSUE SPECIFICITY</scope>
    <scope>INVOLVEMENT IN SPGF28</scope>
    <scope>VARIANTS SPGF28 1701-GLN--ILE-2048 DEL AND 1931-ARG--ILE-2048 DEL</scope>
</reference>
<reference key="14">
    <citation type="journal article" date="2019" name="Genet. Med.">
        <title>A homozygous FANCM frameshift pathogenic variant causes male infertility.</title>
        <authorList>
            <person name="Yin H."/>
            <person name="Ma H."/>
            <person name="Hussain S."/>
            <person name="Zhang H."/>
            <person name="Xie X."/>
            <person name="Jiang L."/>
            <person name="Jiang X."/>
            <person name="Iqbal F."/>
            <person name="Bukhari I."/>
            <person name="Jiang H."/>
            <person name="Ali A."/>
            <person name="Zhong L."/>
            <person name="Li T."/>
            <person name="Fan S."/>
            <person name="Zhang B."/>
            <person name="Gao J."/>
            <person name="Li Y."/>
            <person name="Nazish J."/>
            <person name="Khan T."/>
            <person name="Khan M."/>
            <person name="Zubair M."/>
            <person name="Hao Q."/>
            <person name="Fang H."/>
            <person name="Huang J."/>
            <person name="Huleihel M."/>
            <person name="Sha J."/>
            <person name="Pandita T.K."/>
            <person name="Zhang Y."/>
            <person name="Shi Q."/>
        </authorList>
    </citation>
    <scope>INVOLVEMENT IN SPGF28</scope>
</reference>
<reference key="15">
    <citation type="journal article" date="2019" name="Genet. Med.">
        <authorList>
            <person name="Yin H."/>
            <person name="Ma H."/>
            <person name="Hussain S."/>
            <person name="Zhang H."/>
            <person name="Xie X."/>
            <person name="Jiang L."/>
            <person name="Jiang X."/>
            <person name="Iqbal F."/>
            <person name="Bukhari I."/>
            <person name="Jiang H."/>
            <person name="Ali A."/>
            <person name="Zhong L."/>
            <person name="Li T."/>
            <person name="Fan S."/>
            <person name="Zhang B."/>
            <person name="Gao J."/>
            <person name="Li Y."/>
            <person name="Nazish J."/>
            <person name="Khan T."/>
            <person name="Khan M."/>
            <person name="Zubair M."/>
            <person name="Hao Q."/>
            <person name="Fang H."/>
            <person name="Huang J."/>
            <person name="Huleihel M."/>
            <person name="Sha J."/>
            <person name="Pandita T.K."/>
            <person name="Zhang Y."/>
            <person name="Shi Q."/>
        </authorList>
    </citation>
    <scope>ERRATUM OF PUBMED:29895858</scope>
</reference>
<name>FANCM_HUMAN</name>
<keyword id="KW-0002">3D-structure</keyword>
<keyword id="KW-0025">Alternative splicing</keyword>
<keyword id="KW-0067">ATP-binding</keyword>
<keyword id="KW-0225">Disease variant</keyword>
<keyword id="KW-0227">DNA damage</keyword>
<keyword id="KW-0234">DNA repair</keyword>
<keyword id="KW-0238">DNA-binding</keyword>
<keyword id="KW-0347">Helicase</keyword>
<keyword id="KW-0378">Hydrolase</keyword>
<keyword id="KW-0547">Nucleotide-binding</keyword>
<keyword id="KW-0539">Nucleus</keyword>
<keyword id="KW-0597">Phosphoprotein</keyword>
<keyword id="KW-1066">Premature ovarian failure</keyword>
<keyword id="KW-1267">Proteomics identification</keyword>
<keyword id="KW-1185">Reference proteome</keyword>
<organism>
    <name type="scientific">Homo sapiens</name>
    <name type="common">Human</name>
    <dbReference type="NCBI Taxonomy" id="9606"/>
    <lineage>
        <taxon>Eukaryota</taxon>
        <taxon>Metazoa</taxon>
        <taxon>Chordata</taxon>
        <taxon>Craniata</taxon>
        <taxon>Vertebrata</taxon>
        <taxon>Euteleostomi</taxon>
        <taxon>Mammalia</taxon>
        <taxon>Eutheria</taxon>
        <taxon>Euarchontoglires</taxon>
        <taxon>Primates</taxon>
        <taxon>Haplorrhini</taxon>
        <taxon>Catarrhini</taxon>
        <taxon>Hominidae</taxon>
        <taxon>Homo</taxon>
    </lineage>
</organism>
<sequence length="2048" mass="232191">MSGRQRTLFQTWGSSISRSSGTPGCSSGTERPQSPGSSKAPLPAAAEAQLESDDDVLLVAAYEAERQLCLENGGFCTSAGALWIYPTNCPVRDYQLHISRAALFCNTLVCLPTGLGKTFIAAVVMYNFYRWFPSGKVVFMAPTKPLVTQQIEACYQVMGIPQSHMAEMTGSTQASTRKEIWCSKRVLFLTPQVMVNDLSRGACPAAEIKCLVIDEAHKALGNYAYCQVVRELVKYTNHFRILALSATPGSDIKAVQQVITNLLIGQIELRSEDSPDILTYSHERKVEKLIVPLGEELAAIQKTYIQILESFARSLIQRNVLMRRDIPNLTKYQIILARDQFRKNPSPNIVGIQQGIIEGEFAICISLYHGYELLQQMGMRSLYFFLCGIMDGTKGMTRSKNELGRNEDFMKLYNHLECMFARTRSTSANGISAIQQGDKNKKFVYSHPKLKKLEEVVIEHFKSWNAENTTEKKRDETRVMIFSSFRDSVQEIAEMLSQHQPIIRVMTFVGHASGKSTKGFTQKEQLEVVKQFRDGGYNTLVSTCVGEEGLDIGEVDLIICFDSQKSPIRLVQRMGRTGRKRQGRIVIILSEGREERIYNQSQSNKRSIYKAISSNRQVLHFYQRSPRMVPDGINPKLHKMFITHGVYEPEKPSRNLQRKSSIFSYRDGMRQSSLKKDWFLSEEEFKLWNRLYRLRDSDEIKEITLPQVQFSSLQNEENKPAQESTTGIHQLSLSEWRLWQDHPLPTHQVDHSDRCRHFIGLMQMIEGMRHEEGECSYELEVESYLQMEDVTSTFIAPRNESNNLASDTFITHKKSSFIKNINQGSSSSVIESDEECAEIVKQTHIKPTKIVSLKKKVSKEIKKDQLKKENNHGIIDSVDNDRNSTVENIFQEDLPNDKRTSDTDEIAATCTINENVIKEPCVLLTECQFTNKSTSSLAGNVLDSGYNSFNDEKSVSSNLFLPFEEELYIVRTDDQFYNCHSLTKEVLANVERFLSYSPPPLSGLSDLEYEIAKGTALENLLFLPCAEHLRSDKCTCLLSHSAVNSQQNLELNSLKCINYPSEKSCLYDIPNDNISDEPSLCDCDVHKHNQNENLVPNNRVQIHRSPAQNLVGENNHDVDNSDLPVLSTDQDESLLLFEDVNTEFDDVSLSPLNSKSESLPVSDKTAISETPLVSQFLISDELLLDNNSELQDQITRDANSFKSRDQRGVQEEKVKNHEDIFDCSRDLFSVTFDLGFCSPDSDDEILEHTSDSNRPLDDLYGRYLEIKEISDANYVSNQALIPRDHSKNFTSGTVIIPSNEDMQNPNYVHLPLSAAKNEELLSPGYSQFSLPVQKKVMSTPLSKSNTLNSFSKIRKEILKTPDSSKEKVNLQRFKEALNSTFDYSEFSLEKSKSSGPMYLHKSCHSVEDGQLLTSNESEDDEIFRRKVKRAKGNVLNSPEDQKNSEVDSPLHAVKKRRFPINRSELSSSDESENFPKPCSQLEDFKVCNGNARRGIKVPKRQSHLKHVARKFLDDEAELSEEDAEYVSSDENDESENEQDSSLLDFLNDETQLSQAINDSEMRAIYMKSLRSPMMNNKYKMIHKTHKNINIFSQIPEQDETYLEDSFCVDEEESCKGQSSEEEVCVDFNLITDDCFANSKKYKTRRAVMLKEMMEQNCAHSKKKLSRIILPDDSSEEENNVNDKRESNIAVNPSTVKKNKQQDHCLNSVPSGSSAQSKVRSTPRVNPLAKQSKQTSLNLKDTISEVSDFKPQNHNEVQSTTPPFTTVDSQKDCRKFPVPQKDGSALEDSSTSGASCSKSRPHLAGTHTSLRLPQEGKGTCILVGGHEITSGLEVISSLRAIHGLQVEVCPLNGCDYIVSNRMVVERRSQSEMLNSVNKNKFIEQIQHLQSMFERICVIVEKDREKTGDTSRMFRRTKSYDSLLTTLIGAGIRILFSSCQEETADLLKELSLVEQRKNVGIHVPTVVNSNKSEALQFYLSIPNISYITALNMCHQFSSVKRMANSSLQEISMYAQVTHQKAEEIYRYIHYVFDIQMLPNDLNQDRLKSDI</sequence>
<evidence type="ECO:0000255" key="1">
    <source>
        <dbReference type="PROSITE-ProRule" id="PRU00541"/>
    </source>
</evidence>
<evidence type="ECO:0000255" key="2">
    <source>
        <dbReference type="PROSITE-ProRule" id="PRU00542"/>
    </source>
</evidence>
<evidence type="ECO:0000256" key="3">
    <source>
        <dbReference type="SAM" id="MobiDB-lite"/>
    </source>
</evidence>
<evidence type="ECO:0000269" key="4">
    <source>
    </source>
</evidence>
<evidence type="ECO:0000269" key="5">
    <source>
    </source>
</evidence>
<evidence type="ECO:0000269" key="6">
    <source>
    </source>
</evidence>
<evidence type="ECO:0000269" key="7">
    <source>
    </source>
</evidence>
<evidence type="ECO:0000269" key="8">
    <source>
    </source>
</evidence>
<evidence type="ECO:0000269" key="9">
    <source>
    </source>
</evidence>
<evidence type="ECO:0000269" key="10">
    <source>
    </source>
</evidence>
<evidence type="ECO:0000269" key="11">
    <source>
    </source>
</evidence>
<evidence type="ECO:0000269" key="12">
    <source>
    </source>
</evidence>
<evidence type="ECO:0000269" key="13">
    <source>
    </source>
</evidence>
<evidence type="ECO:0000303" key="14">
    <source>
    </source>
</evidence>
<evidence type="ECO:0000303" key="15">
    <source>
    </source>
</evidence>
<evidence type="ECO:0000303" key="16">
    <source>
    </source>
</evidence>
<evidence type="ECO:0000303" key="17">
    <source>
    </source>
</evidence>
<evidence type="ECO:0000305" key="18"/>
<evidence type="ECO:0007744" key="19">
    <source>
    </source>
</evidence>
<evidence type="ECO:0007829" key="20">
    <source>
        <dbReference type="PDB" id="4BXO"/>
    </source>
</evidence>
<evidence type="ECO:0007829" key="21">
    <source>
        <dbReference type="PDB" id="4DRB"/>
    </source>
</evidence>
<evidence type="ECO:0007829" key="22">
    <source>
        <dbReference type="PDB" id="4E45"/>
    </source>
</evidence>
<evidence type="ECO:0007829" key="23">
    <source>
        <dbReference type="PDB" id="4M6W"/>
    </source>
</evidence>
<protein>
    <recommendedName>
        <fullName>Fanconi anemia group M protein</fullName>
        <shortName>Protein FACM</shortName>
        <ecNumber evidence="5 7 8 10">3.6.4.13</ecNumber>
    </recommendedName>
    <alternativeName>
        <fullName>ATP-dependent RNA helicase FANCM</fullName>
    </alternativeName>
    <alternativeName>
        <fullName>Fanconi anemia-associated polypeptide of 250 kDa</fullName>
        <shortName evidence="16">FAAP250</shortName>
    </alternativeName>
    <alternativeName>
        <fullName evidence="16 17">Protein Hef ortholog</fullName>
    </alternativeName>
</protein>
<proteinExistence type="evidence at protein level"/>